<accession>Q86LE5</accession>
<proteinExistence type="evidence at protein level"/>
<sequence>MKAIFVSALLVVALVASTSAHHQELCTKGDDALVTELECIRLRISPETNAAFDNAVQQLNCLNRACAYRKMCATNNLEQAMSVYFTNEQIKEIHDAATACDPEAHHEHDH</sequence>
<dbReference type="EMBL" id="AY233212">
    <property type="protein sequence ID" value="AAO48942.1"/>
    <property type="molecule type" value="mRNA"/>
</dbReference>
<dbReference type="RefSeq" id="XP_037269734.1">
    <property type="nucleotide sequence ID" value="XM_037413837.1"/>
</dbReference>
<dbReference type="PDB" id="2KNJ">
    <property type="method" value="NMR"/>
    <property type="chains" value="A=21-110"/>
</dbReference>
<dbReference type="PDBsum" id="2KNJ"/>
<dbReference type="BMRB" id="Q86LE5"/>
<dbReference type="SMR" id="Q86LE5"/>
<dbReference type="EnsemblMetazoa" id="XM_037413837.1">
    <property type="protein sequence ID" value="XP_037269734.1"/>
    <property type="gene ID" value="LOC119161398"/>
</dbReference>
<dbReference type="GeneID" id="119161398"/>
<dbReference type="VEuPathDB" id="VectorBase:LOC119161398"/>
<dbReference type="OMA" id="NRACAYR"/>
<dbReference type="OrthoDB" id="6493950at2759"/>
<dbReference type="EvolutionaryTrace" id="Q86LE5"/>
<dbReference type="GO" id="GO:0005576">
    <property type="term" value="C:extracellular region"/>
    <property type="evidence" value="ECO:0000314"/>
    <property type="project" value="UniProtKB"/>
</dbReference>
<dbReference type="GO" id="GO:0016531">
    <property type="term" value="F:copper chaperone activity"/>
    <property type="evidence" value="ECO:0000314"/>
    <property type="project" value="UniProtKB"/>
</dbReference>
<dbReference type="GO" id="GO:0005506">
    <property type="term" value="F:iron ion binding"/>
    <property type="evidence" value="ECO:0000314"/>
    <property type="project" value="UniProtKB"/>
</dbReference>
<dbReference type="GO" id="GO:0046911">
    <property type="term" value="F:metal chelating activity"/>
    <property type="evidence" value="ECO:0000314"/>
    <property type="project" value="UniProtKB"/>
</dbReference>
<dbReference type="GO" id="GO:0050832">
    <property type="term" value="P:defense response to fungus"/>
    <property type="evidence" value="ECO:0000314"/>
    <property type="project" value="UniProtKB"/>
</dbReference>
<dbReference type="GO" id="GO:0050830">
    <property type="term" value="P:defense response to Gram-positive bacterium"/>
    <property type="evidence" value="ECO:0000314"/>
    <property type="project" value="UniProtKB"/>
</dbReference>
<dbReference type="GO" id="GO:0045087">
    <property type="term" value="P:innate immune response"/>
    <property type="evidence" value="ECO:0007669"/>
    <property type="project" value="UniProtKB-KW"/>
</dbReference>
<dbReference type="GO" id="GO:0031640">
    <property type="term" value="P:killing of cells of another organism"/>
    <property type="evidence" value="ECO:0007669"/>
    <property type="project" value="UniProtKB-KW"/>
</dbReference>
<dbReference type="FunFam" id="1.10.150.440:FF:000001">
    <property type="entry name" value="Antimicrobial peptide microplusin"/>
    <property type="match status" value="1"/>
</dbReference>
<dbReference type="Gene3D" id="1.10.150.440">
    <property type="match status" value="1"/>
</dbReference>
<feature type="signal peptide" evidence="1">
    <location>
        <begin position="1"/>
        <end position="20"/>
    </location>
</feature>
<feature type="chain" id="PRO_0000392949" description="Antimicrobial peptide microplusin" evidence="1">
    <location>
        <begin position="21"/>
        <end position="110"/>
    </location>
</feature>
<feature type="disulfide bond" evidence="2">
    <location>
        <begin position="26"/>
        <end position="72"/>
    </location>
</feature>
<feature type="disulfide bond" evidence="2">
    <location>
        <begin position="39"/>
        <end position="100"/>
    </location>
</feature>
<feature type="disulfide bond" evidence="2">
    <location>
        <begin position="61"/>
        <end position="66"/>
    </location>
</feature>
<feature type="helix" evidence="6">
    <location>
        <begin position="29"/>
        <end position="41"/>
    </location>
</feature>
<feature type="helix" evidence="6">
    <location>
        <begin position="48"/>
        <end position="58"/>
    </location>
</feature>
<feature type="helix" evidence="6">
    <location>
        <begin position="64"/>
        <end position="74"/>
    </location>
</feature>
<feature type="helix" evidence="6">
    <location>
        <begin position="78"/>
        <end position="84"/>
    </location>
</feature>
<feature type="helix" evidence="6">
    <location>
        <begin position="87"/>
        <end position="99"/>
    </location>
</feature>
<feature type="turn" evidence="6">
    <location>
        <begin position="102"/>
        <end position="104"/>
    </location>
</feature>
<evidence type="ECO:0000269" key="1">
    <source>
    </source>
</evidence>
<evidence type="ECO:0000269" key="2">
    <source>
    </source>
</evidence>
<evidence type="ECO:0000303" key="3">
    <source>
    </source>
</evidence>
<evidence type="ECO:0000305" key="4"/>
<evidence type="ECO:0000312" key="5">
    <source>
        <dbReference type="EMBL" id="AAO48942.1"/>
    </source>
</evidence>
<evidence type="ECO:0007829" key="6">
    <source>
        <dbReference type="PDB" id="2KNJ"/>
    </source>
</evidence>
<keyword id="KW-0002">3D-structure</keyword>
<keyword id="KW-0044">Antibiotic</keyword>
<keyword id="KW-0929">Antimicrobial</keyword>
<keyword id="KW-0186">Copper</keyword>
<keyword id="KW-0903">Direct protein sequencing</keyword>
<keyword id="KW-1015">Disulfide bond</keyword>
<keyword id="KW-0295">Fungicide</keyword>
<keyword id="KW-0391">Immunity</keyword>
<keyword id="KW-0399">Innate immunity</keyword>
<keyword id="KW-0479">Metal-binding</keyword>
<keyword id="KW-0964">Secreted</keyword>
<keyword id="KW-0732">Signal</keyword>
<name>MPSIN_RHIMP</name>
<comment type="function">
    <text evidence="1">Has bacteriostatic activity against the Gram-positive bacterium M.luteus, but not against Gram-negative bacterium E.coli SBS363. Has fungistatic activity against C.neoformans, but not C.albicans. Binds and sequesters copper and iron ions. Copper-chelating is crucial for antimicrobial activity against M.luteus.</text>
</comment>
<comment type="subcellular location">
    <subcellularLocation>
        <location evidence="1">Secreted</location>
    </subcellularLocation>
</comment>
<comment type="tissue specificity">
    <text evidence="1">Expressed in the hemocytes, fat body and ovaries.</text>
</comment>
<comment type="mass spectrometry"/>
<organism>
    <name type="scientific">Rhipicephalus microplus</name>
    <name type="common">Cattle tick</name>
    <name type="synonym">Boophilus microplus</name>
    <dbReference type="NCBI Taxonomy" id="6941"/>
    <lineage>
        <taxon>Eukaryota</taxon>
        <taxon>Metazoa</taxon>
        <taxon>Ecdysozoa</taxon>
        <taxon>Arthropoda</taxon>
        <taxon>Chelicerata</taxon>
        <taxon>Arachnida</taxon>
        <taxon>Acari</taxon>
        <taxon>Parasitiformes</taxon>
        <taxon>Ixodida</taxon>
        <taxon>Ixodoidea</taxon>
        <taxon>Ixodidae</taxon>
        <taxon>Rhipicephalinae</taxon>
        <taxon>Rhipicephalus</taxon>
        <taxon>Boophilus</taxon>
    </lineage>
</organism>
<reference evidence="4 5" key="1">
    <citation type="journal article" date="2004" name="Dev. Comp. Immunol.">
        <title>Cysteine-rich antimicrobial peptides of the cattle tick Boophilus microplus: isolation, structural characterization and tissue expression profile.</title>
        <authorList>
            <person name="Fogaca A.C."/>
            <person name="Lorenzini D.M."/>
            <person name="Kaku L.M."/>
            <person name="Esteves E."/>
            <person name="Bulet P."/>
            <person name="Daffre S."/>
        </authorList>
    </citation>
    <scope>NUCLEOTIDE SEQUENCE [MRNA]</scope>
    <scope>PROTEIN SEQUENCE OF 21-110</scope>
    <scope>FUNCTION</scope>
    <scope>SUBCELLULAR LOCATION</scope>
    <scope>TISSUE SPECIFICITY</scope>
    <scope>MASS SPECTROMETRY</scope>
    <source>
        <strain evidence="1">Porto Alegre</strain>
        <tissue evidence="1">Hemolymph</tissue>
    </source>
</reference>
<reference evidence="4" key="2">
    <citation type="journal article" date="2009" name="J. Biol. Chem.">
        <title>Structure and mode of action of microplusin, a copper II-chelating antimicrobial peptide from the cattle tick Rhipicephalus (Boophilus) microplus.</title>
        <authorList>
            <person name="Silva F.D."/>
            <person name="Rezende C.A."/>
            <person name="Rossi D.C."/>
            <person name="Esteves E."/>
            <person name="Dyszy F.H."/>
            <person name="Schreier S."/>
            <person name="Gueiros-Filho F."/>
            <person name="Campos C.B."/>
            <person name="Pires J.R."/>
            <person name="Daffre S."/>
        </authorList>
    </citation>
    <scope>STRUCTURE BY NMR IN COMPLEX WITH COPPER</scope>
    <scope>DISULFIDE BONDS</scope>
    <scope>COPPER-BINDING</scope>
</reference>
<protein>
    <recommendedName>
        <fullName evidence="3">Antimicrobial peptide microplusin</fullName>
        <shortName evidence="3">Microplusin</shortName>
    </recommendedName>
</protein>